<feature type="chain" id="PRO_1000079632" description="DNA-directed RNA polymerase subunit omega">
    <location>
        <begin position="1"/>
        <end position="90"/>
    </location>
</feature>
<keyword id="KW-0240">DNA-directed RNA polymerase</keyword>
<keyword id="KW-0548">Nucleotidyltransferase</keyword>
<keyword id="KW-0804">Transcription</keyword>
<keyword id="KW-0808">Transferase</keyword>
<gene>
    <name evidence="1" type="primary">rpoZ</name>
    <name type="ordered locus">HSM_0547</name>
</gene>
<comment type="function">
    <text evidence="1">Promotes RNA polymerase assembly. Latches the N- and C-terminal regions of the beta' subunit thereby facilitating its interaction with the beta and alpha subunits.</text>
</comment>
<comment type="catalytic activity">
    <reaction evidence="1">
        <text>RNA(n) + a ribonucleoside 5'-triphosphate = RNA(n+1) + diphosphate</text>
        <dbReference type="Rhea" id="RHEA:21248"/>
        <dbReference type="Rhea" id="RHEA-COMP:14527"/>
        <dbReference type="Rhea" id="RHEA-COMP:17342"/>
        <dbReference type="ChEBI" id="CHEBI:33019"/>
        <dbReference type="ChEBI" id="CHEBI:61557"/>
        <dbReference type="ChEBI" id="CHEBI:140395"/>
        <dbReference type="EC" id="2.7.7.6"/>
    </reaction>
</comment>
<comment type="subunit">
    <text evidence="1">The RNAP catalytic core consists of 2 alpha, 1 beta, 1 beta' and 1 omega subunit. When a sigma factor is associated with the core the holoenzyme is formed, which can initiate transcription.</text>
</comment>
<comment type="similarity">
    <text evidence="1">Belongs to the RNA polymerase subunit omega family.</text>
</comment>
<accession>B0URZ0</accession>
<proteinExistence type="inferred from homology"/>
<organism>
    <name type="scientific">Histophilus somni (strain 2336)</name>
    <name type="common">Haemophilus somnus</name>
    <dbReference type="NCBI Taxonomy" id="228400"/>
    <lineage>
        <taxon>Bacteria</taxon>
        <taxon>Pseudomonadati</taxon>
        <taxon>Pseudomonadota</taxon>
        <taxon>Gammaproteobacteria</taxon>
        <taxon>Pasteurellales</taxon>
        <taxon>Pasteurellaceae</taxon>
        <taxon>Histophilus</taxon>
    </lineage>
</organism>
<evidence type="ECO:0000255" key="1">
    <source>
        <dbReference type="HAMAP-Rule" id="MF_00366"/>
    </source>
</evidence>
<name>RPOZ_HISS2</name>
<reference key="1">
    <citation type="submission" date="2008-02" db="EMBL/GenBank/DDBJ databases">
        <title>Complete sequence of Haemophilus somnus 2336.</title>
        <authorList>
            <consortium name="US DOE Joint Genome Institute"/>
            <person name="Siddaramappa S."/>
            <person name="Duncan A.J."/>
            <person name="Challacombe J.F."/>
            <person name="Rainey D."/>
            <person name="Gillaspy A.F."/>
            <person name="Carson M."/>
            <person name="Gipson J."/>
            <person name="Gipson M."/>
            <person name="Bruce D."/>
            <person name="Detter J.C."/>
            <person name="Han C.S."/>
            <person name="Land M."/>
            <person name="Tapia R."/>
            <person name="Thompson L.S."/>
            <person name="Orvis J."/>
            <person name="Zaitshik J."/>
            <person name="Barnes G."/>
            <person name="Brettin T.S."/>
            <person name="Dyer D.W."/>
            <person name="Inzana T.J."/>
        </authorList>
    </citation>
    <scope>NUCLEOTIDE SEQUENCE [LARGE SCALE GENOMIC DNA]</scope>
    <source>
        <strain>2336</strain>
    </source>
</reference>
<sequence length="90" mass="10361">MARVTVQDAVEKVGNRFDLILTAARRARELQLHKREPLVPEDNDKPTVIALREIEKGLINNDIMNAHERREALEQETAELNTISLLYQNN</sequence>
<dbReference type="EC" id="2.7.7.6" evidence="1"/>
<dbReference type="EMBL" id="CP000947">
    <property type="protein sequence ID" value="ACA32197.1"/>
    <property type="molecule type" value="Genomic_DNA"/>
</dbReference>
<dbReference type="RefSeq" id="WP_011609609.1">
    <property type="nucleotide sequence ID" value="NC_010519.1"/>
</dbReference>
<dbReference type="SMR" id="B0URZ0"/>
<dbReference type="STRING" id="228400.HSM_0547"/>
<dbReference type="GeneID" id="31486820"/>
<dbReference type="KEGG" id="hsm:HSM_0547"/>
<dbReference type="HOGENOM" id="CLU_125406_5_2_6"/>
<dbReference type="GO" id="GO:0000428">
    <property type="term" value="C:DNA-directed RNA polymerase complex"/>
    <property type="evidence" value="ECO:0007669"/>
    <property type="project" value="UniProtKB-KW"/>
</dbReference>
<dbReference type="GO" id="GO:0003677">
    <property type="term" value="F:DNA binding"/>
    <property type="evidence" value="ECO:0007669"/>
    <property type="project" value="UniProtKB-UniRule"/>
</dbReference>
<dbReference type="GO" id="GO:0003899">
    <property type="term" value="F:DNA-directed RNA polymerase activity"/>
    <property type="evidence" value="ECO:0007669"/>
    <property type="project" value="UniProtKB-UniRule"/>
</dbReference>
<dbReference type="GO" id="GO:0006351">
    <property type="term" value="P:DNA-templated transcription"/>
    <property type="evidence" value="ECO:0007669"/>
    <property type="project" value="UniProtKB-UniRule"/>
</dbReference>
<dbReference type="Gene3D" id="3.90.940.10">
    <property type="match status" value="1"/>
</dbReference>
<dbReference type="HAMAP" id="MF_00366">
    <property type="entry name" value="RNApol_bact_RpoZ"/>
    <property type="match status" value="1"/>
</dbReference>
<dbReference type="InterPro" id="IPR003716">
    <property type="entry name" value="DNA-dir_RNA_pol_omega"/>
</dbReference>
<dbReference type="InterPro" id="IPR006110">
    <property type="entry name" value="Pol_omega/Rpo6/RPB6"/>
</dbReference>
<dbReference type="InterPro" id="IPR036161">
    <property type="entry name" value="RPB6/omega-like_sf"/>
</dbReference>
<dbReference type="NCBIfam" id="TIGR00690">
    <property type="entry name" value="rpoZ"/>
    <property type="match status" value="1"/>
</dbReference>
<dbReference type="PANTHER" id="PTHR34476">
    <property type="entry name" value="DNA-DIRECTED RNA POLYMERASE SUBUNIT OMEGA"/>
    <property type="match status" value="1"/>
</dbReference>
<dbReference type="PANTHER" id="PTHR34476:SF1">
    <property type="entry name" value="DNA-DIRECTED RNA POLYMERASE SUBUNIT OMEGA"/>
    <property type="match status" value="1"/>
</dbReference>
<dbReference type="Pfam" id="PF01192">
    <property type="entry name" value="RNA_pol_Rpb6"/>
    <property type="match status" value="1"/>
</dbReference>
<dbReference type="SMART" id="SM01409">
    <property type="entry name" value="RNA_pol_Rpb6"/>
    <property type="match status" value="1"/>
</dbReference>
<dbReference type="SUPFAM" id="SSF63562">
    <property type="entry name" value="RPB6/omega subunit-like"/>
    <property type="match status" value="1"/>
</dbReference>
<protein>
    <recommendedName>
        <fullName evidence="1">DNA-directed RNA polymerase subunit omega</fullName>
        <shortName evidence="1">RNAP omega subunit</shortName>
        <ecNumber evidence="1">2.7.7.6</ecNumber>
    </recommendedName>
    <alternativeName>
        <fullName evidence="1">RNA polymerase omega subunit</fullName>
    </alternativeName>
    <alternativeName>
        <fullName evidence="1">Transcriptase subunit omega</fullName>
    </alternativeName>
</protein>